<gene>
    <name evidence="1" type="primary">engB</name>
    <name type="ordered locus">Pput_0141</name>
</gene>
<feature type="chain" id="PRO_1000005843" description="Probable GTP-binding protein EngB">
    <location>
        <begin position="1"/>
        <end position="210"/>
    </location>
</feature>
<feature type="domain" description="EngB-type G" evidence="1">
    <location>
        <begin position="30"/>
        <end position="204"/>
    </location>
</feature>
<feature type="binding site" evidence="1">
    <location>
        <begin position="38"/>
        <end position="45"/>
    </location>
    <ligand>
        <name>GTP</name>
        <dbReference type="ChEBI" id="CHEBI:37565"/>
    </ligand>
</feature>
<feature type="binding site" evidence="1">
    <location>
        <position position="45"/>
    </location>
    <ligand>
        <name>Mg(2+)</name>
        <dbReference type="ChEBI" id="CHEBI:18420"/>
    </ligand>
</feature>
<feature type="binding site" evidence="1">
    <location>
        <begin position="64"/>
        <end position="68"/>
    </location>
    <ligand>
        <name>GTP</name>
        <dbReference type="ChEBI" id="CHEBI:37565"/>
    </ligand>
</feature>
<feature type="binding site" evidence="1">
    <location>
        <position position="66"/>
    </location>
    <ligand>
        <name>Mg(2+)</name>
        <dbReference type="ChEBI" id="CHEBI:18420"/>
    </ligand>
</feature>
<feature type="binding site" evidence="1">
    <location>
        <begin position="82"/>
        <end position="85"/>
    </location>
    <ligand>
        <name>GTP</name>
        <dbReference type="ChEBI" id="CHEBI:37565"/>
    </ligand>
</feature>
<feature type="binding site" evidence="1">
    <location>
        <begin position="149"/>
        <end position="152"/>
    </location>
    <ligand>
        <name>GTP</name>
        <dbReference type="ChEBI" id="CHEBI:37565"/>
    </ligand>
</feature>
<feature type="binding site" evidence="1">
    <location>
        <begin position="182"/>
        <end position="185"/>
    </location>
    <ligand>
        <name>GTP</name>
        <dbReference type="ChEBI" id="CHEBI:37565"/>
    </ligand>
</feature>
<reference key="1">
    <citation type="submission" date="2007-05" db="EMBL/GenBank/DDBJ databases">
        <title>Complete sequence of Pseudomonas putida F1.</title>
        <authorList>
            <consortium name="US DOE Joint Genome Institute"/>
            <person name="Copeland A."/>
            <person name="Lucas S."/>
            <person name="Lapidus A."/>
            <person name="Barry K."/>
            <person name="Detter J.C."/>
            <person name="Glavina del Rio T."/>
            <person name="Hammon N."/>
            <person name="Israni S."/>
            <person name="Dalin E."/>
            <person name="Tice H."/>
            <person name="Pitluck S."/>
            <person name="Chain P."/>
            <person name="Malfatti S."/>
            <person name="Shin M."/>
            <person name="Vergez L."/>
            <person name="Schmutz J."/>
            <person name="Larimer F."/>
            <person name="Land M."/>
            <person name="Hauser L."/>
            <person name="Kyrpides N."/>
            <person name="Lykidis A."/>
            <person name="Parales R."/>
            <person name="Richardson P."/>
        </authorList>
    </citation>
    <scope>NUCLEOTIDE SEQUENCE [LARGE SCALE GENOMIC DNA]</scope>
    <source>
        <strain>ATCC 700007 / DSM 6899 / JCM 31910 / BCRC 17059 / LMG 24140 / F1</strain>
    </source>
</reference>
<keyword id="KW-0131">Cell cycle</keyword>
<keyword id="KW-0132">Cell division</keyword>
<keyword id="KW-0342">GTP-binding</keyword>
<keyword id="KW-0460">Magnesium</keyword>
<keyword id="KW-0479">Metal-binding</keyword>
<keyword id="KW-0547">Nucleotide-binding</keyword>
<keyword id="KW-0717">Septation</keyword>
<protein>
    <recommendedName>
        <fullName evidence="1">Probable GTP-binding protein EngB</fullName>
    </recommendedName>
</protein>
<sequence length="210" mass="23454">MQVKNPILGLCQKAKFALSAAKVEQCPDDQGYEVAFAGRSNAGKSSALNTLTHASLARTSKTPGRTQLLNFFSLDDERRLVDLPGYGYAKVPIPLKQHWQKHLEAYLGSRECLRGVILMMDVRHPMTDFDKMMLDWAKASSMPMHILLTKADKLTHGAGKNTLLKVQSEIRKGWGDGVTIQLFSAPKRLGVEDAYRVLADWMELEDKPVI</sequence>
<organism>
    <name type="scientific">Pseudomonas putida (strain ATCC 700007 / DSM 6899 / JCM 31910 / BCRC 17059 / LMG 24140 / F1)</name>
    <dbReference type="NCBI Taxonomy" id="351746"/>
    <lineage>
        <taxon>Bacteria</taxon>
        <taxon>Pseudomonadati</taxon>
        <taxon>Pseudomonadota</taxon>
        <taxon>Gammaproteobacteria</taxon>
        <taxon>Pseudomonadales</taxon>
        <taxon>Pseudomonadaceae</taxon>
        <taxon>Pseudomonas</taxon>
    </lineage>
</organism>
<name>ENGB_PSEP1</name>
<evidence type="ECO:0000255" key="1">
    <source>
        <dbReference type="HAMAP-Rule" id="MF_00321"/>
    </source>
</evidence>
<comment type="function">
    <text evidence="1">Necessary for normal cell division and for the maintenance of normal septation.</text>
</comment>
<comment type="cofactor">
    <cofactor evidence="1">
        <name>Mg(2+)</name>
        <dbReference type="ChEBI" id="CHEBI:18420"/>
    </cofactor>
</comment>
<comment type="similarity">
    <text evidence="1">Belongs to the TRAFAC class TrmE-Era-EngA-EngB-Septin-like GTPase superfamily. EngB GTPase family.</text>
</comment>
<dbReference type="EMBL" id="CP000712">
    <property type="protein sequence ID" value="ABQ76316.1"/>
    <property type="molecule type" value="Genomic_DNA"/>
</dbReference>
<dbReference type="SMR" id="A5VWQ6"/>
<dbReference type="KEGG" id="ppf:Pput_0141"/>
<dbReference type="eggNOG" id="COG0218">
    <property type="taxonomic scope" value="Bacteria"/>
</dbReference>
<dbReference type="HOGENOM" id="CLU_033732_1_0_6"/>
<dbReference type="GO" id="GO:0005829">
    <property type="term" value="C:cytosol"/>
    <property type="evidence" value="ECO:0007669"/>
    <property type="project" value="TreeGrafter"/>
</dbReference>
<dbReference type="GO" id="GO:0005525">
    <property type="term" value="F:GTP binding"/>
    <property type="evidence" value="ECO:0007669"/>
    <property type="project" value="UniProtKB-UniRule"/>
</dbReference>
<dbReference type="GO" id="GO:0046872">
    <property type="term" value="F:metal ion binding"/>
    <property type="evidence" value="ECO:0007669"/>
    <property type="project" value="UniProtKB-KW"/>
</dbReference>
<dbReference type="GO" id="GO:0000917">
    <property type="term" value="P:division septum assembly"/>
    <property type="evidence" value="ECO:0007669"/>
    <property type="project" value="UniProtKB-KW"/>
</dbReference>
<dbReference type="CDD" id="cd01876">
    <property type="entry name" value="YihA_EngB"/>
    <property type="match status" value="1"/>
</dbReference>
<dbReference type="FunFam" id="3.40.50.300:FF:000098">
    <property type="entry name" value="Probable GTP-binding protein EngB"/>
    <property type="match status" value="1"/>
</dbReference>
<dbReference type="Gene3D" id="3.40.50.300">
    <property type="entry name" value="P-loop containing nucleotide triphosphate hydrolases"/>
    <property type="match status" value="1"/>
</dbReference>
<dbReference type="HAMAP" id="MF_00321">
    <property type="entry name" value="GTPase_EngB"/>
    <property type="match status" value="1"/>
</dbReference>
<dbReference type="InterPro" id="IPR030393">
    <property type="entry name" value="G_ENGB_dom"/>
</dbReference>
<dbReference type="InterPro" id="IPR006073">
    <property type="entry name" value="GTP-bd"/>
</dbReference>
<dbReference type="InterPro" id="IPR019987">
    <property type="entry name" value="GTP-bd_ribosome_bio_YsxC"/>
</dbReference>
<dbReference type="InterPro" id="IPR027417">
    <property type="entry name" value="P-loop_NTPase"/>
</dbReference>
<dbReference type="NCBIfam" id="TIGR03598">
    <property type="entry name" value="GTPase_YsxC"/>
    <property type="match status" value="1"/>
</dbReference>
<dbReference type="PANTHER" id="PTHR11649:SF13">
    <property type="entry name" value="ENGB-TYPE G DOMAIN-CONTAINING PROTEIN"/>
    <property type="match status" value="1"/>
</dbReference>
<dbReference type="PANTHER" id="PTHR11649">
    <property type="entry name" value="MSS1/TRME-RELATED GTP-BINDING PROTEIN"/>
    <property type="match status" value="1"/>
</dbReference>
<dbReference type="Pfam" id="PF01926">
    <property type="entry name" value="MMR_HSR1"/>
    <property type="match status" value="1"/>
</dbReference>
<dbReference type="SUPFAM" id="SSF52540">
    <property type="entry name" value="P-loop containing nucleoside triphosphate hydrolases"/>
    <property type="match status" value="1"/>
</dbReference>
<dbReference type="PROSITE" id="PS51706">
    <property type="entry name" value="G_ENGB"/>
    <property type="match status" value="1"/>
</dbReference>
<accession>A5VWQ6</accession>
<proteinExistence type="inferred from homology"/>